<evidence type="ECO:0000250" key="1"/>
<evidence type="ECO:0000250" key="2">
    <source>
        <dbReference type="UniProtKB" id="Q3SZ73"/>
    </source>
</evidence>
<evidence type="ECO:0000250" key="3">
    <source>
        <dbReference type="UniProtKB" id="Q8NFV4"/>
    </source>
</evidence>
<evidence type="ECO:0000255" key="4"/>
<evidence type="ECO:0000269" key="5">
    <source>
    </source>
</evidence>
<evidence type="ECO:0000269" key="6">
    <source>
    </source>
</evidence>
<evidence type="ECO:0000269" key="7">
    <source>
    </source>
</evidence>
<evidence type="ECO:0000305" key="8"/>
<evidence type="ECO:0000312" key="9">
    <source>
        <dbReference type="MGI" id="MGI:1916008"/>
    </source>
</evidence>
<evidence type="ECO:0007744" key="10">
    <source>
    </source>
</evidence>
<sequence length="307" mass="33561">MLRWARAWRVPRGVLGASSPRRLAVPVTFCSSRSSGQENADLRPLPLSYNLLDGDATLPAIVFLHGLFGSKTNFNSLAKAMVQRTGRRVLTVDARNHGDSPHSPDASYEAMSQDLQGLLPQLGLVPCVLVGHSMGGKTAMLLALQRPDVVERLVVVDISPVGTTPGSHIGAFIAAMKAVEIPEKVPHSQARKLADKQLSSVVKEAGIRQFLLTNLVEVGGRFSWRLNLDTLAQHLDKIMTFPQQREPYSGPTLFLLGGNSTYVQPSHHSEIRRLFPQAQIQTVPNAGHWVHSDKPQDFMDAVTSFLA</sequence>
<name>ABHDB_MOUSE</name>
<reference key="1">
    <citation type="journal article" date="2002" name="Hum. Genet.">
        <title>Identification of additional transcripts in the Williams-Beuren syndrome critical region.</title>
        <authorList>
            <person name="Merla G."/>
            <person name="Ucla C."/>
            <person name="Guipponi M."/>
            <person name="Reymond A."/>
        </authorList>
    </citation>
    <scope>NUCLEOTIDE SEQUENCE [MRNA]</scope>
</reference>
<reference key="2">
    <citation type="journal article" date="2004" name="Genome Res.">
        <title>The status, quality, and expansion of the NIH full-length cDNA project: the Mammalian Gene Collection (MGC).</title>
        <authorList>
            <consortium name="The MGC Project Team"/>
        </authorList>
    </citation>
    <scope>NUCLEOTIDE SEQUENCE [LARGE SCALE MRNA]</scope>
    <source>
        <strain>FVB/N</strain>
        <tissue>Colon</tissue>
    </source>
</reference>
<reference key="3">
    <citation type="journal article" date="2007" name="Biochim. Biophys. Acta">
        <title>Effects of rosiglitazone and high fat diet on lipase/esterase expression in adipose tissue.</title>
        <authorList>
            <person name="Shen W.-J."/>
            <person name="Patel S."/>
            <person name="Yu Z."/>
            <person name="Jue D."/>
            <person name="Kraemer F.B."/>
        </authorList>
    </citation>
    <scope>TISSUE SPECIFICITY</scope>
    <scope>INDUCTION</scope>
</reference>
<reference key="4">
    <citation type="journal article" date="2010" name="Cell">
        <title>A tissue-specific atlas of mouse protein phosphorylation and expression.</title>
        <authorList>
            <person name="Huttlin E.L."/>
            <person name="Jedrychowski M.P."/>
            <person name="Elias J.E."/>
            <person name="Goswami T."/>
            <person name="Rad R."/>
            <person name="Beausoleil S.A."/>
            <person name="Villen J."/>
            <person name="Haas W."/>
            <person name="Sowa M.E."/>
            <person name="Gygi S.P."/>
        </authorList>
    </citation>
    <scope>IDENTIFICATION BY MASS SPECTROMETRY [LARGE SCALE ANALYSIS]</scope>
    <source>
        <tissue>Brain</tissue>
        <tissue>Brown adipose tissue</tissue>
        <tissue>Heart</tissue>
        <tissue>Kidney</tissue>
        <tissue>Liver</tissue>
        <tissue>Lung</tissue>
        <tissue>Pancreas</tissue>
        <tissue>Spleen</tissue>
        <tissue>Testis</tissue>
    </source>
</reference>
<reference key="5">
    <citation type="journal article" date="2013" name="Mol. Cell">
        <title>SIRT5-mediated lysine desuccinylation impacts diverse metabolic pathways.</title>
        <authorList>
            <person name="Park J."/>
            <person name="Chen Y."/>
            <person name="Tishkoff D.X."/>
            <person name="Peng C."/>
            <person name="Tan M."/>
            <person name="Dai L."/>
            <person name="Xie Z."/>
            <person name="Zhang Y."/>
            <person name="Zwaans B.M."/>
            <person name="Skinner M.E."/>
            <person name="Lombard D.B."/>
            <person name="Zhao Y."/>
        </authorList>
    </citation>
    <scope>SUCCINYLATION [LARGE SCALE ANALYSIS] AT LYS-79 AND LYS-196</scope>
    <scope>IDENTIFICATION BY MASS SPECTROMETRY [LARGE SCALE ANALYSIS]</scope>
    <source>
        <tissue>Liver</tissue>
    </source>
</reference>
<reference key="6">
    <citation type="journal article" date="2020" name="Front. Cell Dev. Biol.">
        <title>ABHD11 Is Critical for Embryonic Stem Cell Expansion, Differentiation and Lipid Metabolic Homeostasis.</title>
        <authorList>
            <person name="Liu G."/>
            <person name="Ruan Y."/>
            <person name="Zhang J."/>
            <person name="Wang X."/>
            <person name="Wu W."/>
            <person name="He P."/>
            <person name="Wang J."/>
            <person name="Xiong J."/>
            <person name="Cheng Y."/>
            <person name="Liu L."/>
            <person name="Yang Y."/>
            <person name="Tian Y."/>
            <person name="Jian R."/>
        </authorList>
    </citation>
    <scope>FUNCTION</scope>
</reference>
<reference key="7">
    <citation type="journal article" date="2020" name="PLoS ONE">
        <title>ABHD11, a new diacylglycerol lipase involved in weight gain regulation.</title>
        <authorList>
            <person name="Escoubet J."/>
            <person name="Kenigsberg M."/>
            <person name="Derock M."/>
            <person name="Yaligara V."/>
            <person name="Bock M.D."/>
            <person name="Roche S."/>
            <person name="Massey F."/>
            <person name="de Foucauld H."/>
            <person name="Bettembourg C."/>
            <person name="Olivier A."/>
            <person name="Berthemy A."/>
            <person name="Capdevielle J."/>
            <person name="Legoux R."/>
            <person name="Perret E."/>
            <person name="Buzy A."/>
            <person name="Chardenot P."/>
            <person name="Destelle V."/>
            <person name="Leroy A."/>
            <person name="Cahours C."/>
            <person name="Teixeira S."/>
            <person name="Juvet P."/>
            <person name="Gauthier P."/>
            <person name="Leguet M."/>
            <person name="Rocheteau-Beaujouan L."/>
            <person name="Chatoux M.A."/>
            <person name="Deshayes W."/>
            <person name="Clement M."/>
            <person name="Kabiri M."/>
            <person name="Orsini C."/>
            <person name="Mikol V."/>
            <person name="Didier M."/>
            <person name="Guillemot J.C."/>
        </authorList>
    </citation>
    <scope>DISRUPTION PHENOTYPE</scope>
    <scope>SUBCELLULAR LOCATION</scope>
</reference>
<accession>Q8K4F5</accession>
<feature type="transit peptide" description="Mitochondrion" evidence="4">
    <location>
        <begin position="1"/>
        <end position="34"/>
    </location>
</feature>
<feature type="chain" id="PRO_0000281004" description="sn-1-specific diacylglycerol lipase ABHD11" evidence="4">
    <location>
        <begin position="35"/>
        <end position="307"/>
    </location>
</feature>
<feature type="active site" description="Charge relay system" evidence="1">
    <location>
        <position position="133"/>
    </location>
</feature>
<feature type="active site" description="Charge relay system" evidence="1">
    <location>
        <position position="229"/>
    </location>
</feature>
<feature type="active site" description="Charge relay system" evidence="1">
    <location>
        <position position="288"/>
    </location>
</feature>
<feature type="modified residue" description="N6-succinyllysine" evidence="10">
    <location>
        <position position="79"/>
    </location>
</feature>
<feature type="modified residue" description="N6-succinyllysine" evidence="10">
    <location>
        <position position="196"/>
    </location>
</feature>
<gene>
    <name evidence="9" type="primary">Abhd11</name>
    <name type="synonym">Wbscr21</name>
</gene>
<keyword id="KW-0378">Hydrolase</keyword>
<keyword id="KW-0496">Mitochondrion</keyword>
<keyword id="KW-1185">Reference proteome</keyword>
<keyword id="KW-0809">Transit peptide</keyword>
<dbReference type="EC" id="3.1.1.116" evidence="3"/>
<dbReference type="EMBL" id="AF412033">
    <property type="protein sequence ID" value="AAM62315.1"/>
    <property type="molecule type" value="mRNA"/>
</dbReference>
<dbReference type="EMBL" id="BC069866">
    <property type="protein sequence ID" value="AAH69866.1"/>
    <property type="molecule type" value="mRNA"/>
</dbReference>
<dbReference type="CCDS" id="CCDS19730.1"/>
<dbReference type="RefSeq" id="NP_660250.1">
    <property type="nucleotide sequence ID" value="NM_145215.2"/>
</dbReference>
<dbReference type="SMR" id="Q8K4F5"/>
<dbReference type="BioGRID" id="213034">
    <property type="interactions" value="1"/>
</dbReference>
<dbReference type="FunCoup" id="Q8K4F5">
    <property type="interactions" value="2227"/>
</dbReference>
<dbReference type="STRING" id="10090.ENSMUSP00000043041"/>
<dbReference type="ChEMBL" id="CHEMBL1795090"/>
<dbReference type="ESTHER" id="mouse-Abhd11">
    <property type="family name" value="ABHD11-Acetyl_transferase"/>
</dbReference>
<dbReference type="GlyGen" id="Q8K4F5">
    <property type="glycosylation" value="1 site"/>
</dbReference>
<dbReference type="iPTMnet" id="Q8K4F5"/>
<dbReference type="PhosphoSitePlus" id="Q8K4F5"/>
<dbReference type="jPOST" id="Q8K4F5"/>
<dbReference type="PaxDb" id="10090-ENSMUSP00000043041"/>
<dbReference type="PeptideAtlas" id="Q8K4F5"/>
<dbReference type="ProteomicsDB" id="296437"/>
<dbReference type="Pumba" id="Q8K4F5"/>
<dbReference type="Antibodypedia" id="14446">
    <property type="antibodies" value="133 antibodies from 24 providers"/>
</dbReference>
<dbReference type="DNASU" id="68758"/>
<dbReference type="Ensembl" id="ENSMUST00000046999.12">
    <property type="protein sequence ID" value="ENSMUSP00000043041.9"/>
    <property type="gene ID" value="ENSMUSG00000040532.15"/>
</dbReference>
<dbReference type="GeneID" id="68758"/>
<dbReference type="KEGG" id="mmu:68758"/>
<dbReference type="UCSC" id="uc008zxg.2">
    <property type="organism name" value="mouse"/>
</dbReference>
<dbReference type="AGR" id="MGI:1916008"/>
<dbReference type="CTD" id="83451"/>
<dbReference type="MGI" id="MGI:1916008">
    <property type="gene designation" value="Abhd11"/>
</dbReference>
<dbReference type="VEuPathDB" id="HostDB:ENSMUSG00000040532"/>
<dbReference type="eggNOG" id="KOG2382">
    <property type="taxonomic scope" value="Eukaryota"/>
</dbReference>
<dbReference type="GeneTree" id="ENSGT00390000015880"/>
<dbReference type="HOGENOM" id="CLU_020336_53_0_1"/>
<dbReference type="InParanoid" id="Q8K4F5"/>
<dbReference type="OMA" id="FLGMSDN"/>
<dbReference type="OrthoDB" id="8119704at2759"/>
<dbReference type="PhylomeDB" id="Q8K4F5"/>
<dbReference type="TreeFam" id="TF314071"/>
<dbReference type="BioGRID-ORCS" id="68758">
    <property type="hits" value="5 hits in 76 CRISPR screens"/>
</dbReference>
<dbReference type="ChiTaRS" id="Abhd11">
    <property type="organism name" value="mouse"/>
</dbReference>
<dbReference type="PRO" id="PR:Q8K4F5"/>
<dbReference type="Proteomes" id="UP000000589">
    <property type="component" value="Chromosome 5"/>
</dbReference>
<dbReference type="RNAct" id="Q8K4F5">
    <property type="molecule type" value="protein"/>
</dbReference>
<dbReference type="Bgee" id="ENSMUSG00000040532">
    <property type="expression patterns" value="Expressed in interventricular septum and 241 other cell types or tissues"/>
</dbReference>
<dbReference type="ExpressionAtlas" id="Q8K4F5">
    <property type="expression patterns" value="baseline and differential"/>
</dbReference>
<dbReference type="GO" id="GO:0005759">
    <property type="term" value="C:mitochondrial matrix"/>
    <property type="evidence" value="ECO:0000250"/>
    <property type="project" value="UniProtKB"/>
</dbReference>
<dbReference type="GO" id="GO:0005739">
    <property type="term" value="C:mitochondrion"/>
    <property type="evidence" value="ECO:0000314"/>
    <property type="project" value="UniProtKB"/>
</dbReference>
<dbReference type="GO" id="GO:0045252">
    <property type="term" value="C:oxoglutarate dehydrogenase complex"/>
    <property type="evidence" value="ECO:0000250"/>
    <property type="project" value="UniProtKB"/>
</dbReference>
<dbReference type="GO" id="GO:0016298">
    <property type="term" value="F:lipase activity"/>
    <property type="evidence" value="ECO:0000250"/>
    <property type="project" value="UniProtKB"/>
</dbReference>
<dbReference type="FunFam" id="3.40.50.1820:FF:000039">
    <property type="entry name" value="Esterase ybfF"/>
    <property type="match status" value="1"/>
</dbReference>
<dbReference type="Gene3D" id="3.40.50.1820">
    <property type="entry name" value="alpha/beta hydrolase"/>
    <property type="match status" value="1"/>
</dbReference>
<dbReference type="InterPro" id="IPR000073">
    <property type="entry name" value="AB_hydrolase_1"/>
</dbReference>
<dbReference type="InterPro" id="IPR029058">
    <property type="entry name" value="AB_hydrolase_fold"/>
</dbReference>
<dbReference type="InterPro" id="IPR000639">
    <property type="entry name" value="Epox_hydrolase-like"/>
</dbReference>
<dbReference type="PANTHER" id="PTHR46118">
    <property type="entry name" value="PROTEIN ABHD11"/>
    <property type="match status" value="1"/>
</dbReference>
<dbReference type="PANTHER" id="PTHR46118:SF4">
    <property type="entry name" value="PROTEIN ABHD11"/>
    <property type="match status" value="1"/>
</dbReference>
<dbReference type="Pfam" id="PF00561">
    <property type="entry name" value="Abhydrolase_1"/>
    <property type="match status" value="1"/>
</dbReference>
<dbReference type="PRINTS" id="PR00111">
    <property type="entry name" value="ABHYDROLASE"/>
</dbReference>
<dbReference type="PRINTS" id="PR00412">
    <property type="entry name" value="EPOXHYDRLASE"/>
</dbReference>
<dbReference type="SUPFAM" id="SSF53474">
    <property type="entry name" value="alpha/beta-Hydrolases"/>
    <property type="match status" value="1"/>
</dbReference>
<organism>
    <name type="scientific">Mus musculus</name>
    <name type="common">Mouse</name>
    <dbReference type="NCBI Taxonomy" id="10090"/>
    <lineage>
        <taxon>Eukaryota</taxon>
        <taxon>Metazoa</taxon>
        <taxon>Chordata</taxon>
        <taxon>Craniata</taxon>
        <taxon>Vertebrata</taxon>
        <taxon>Euteleostomi</taxon>
        <taxon>Mammalia</taxon>
        <taxon>Eutheria</taxon>
        <taxon>Euarchontoglires</taxon>
        <taxon>Glires</taxon>
        <taxon>Rodentia</taxon>
        <taxon>Myomorpha</taxon>
        <taxon>Muroidea</taxon>
        <taxon>Muridae</taxon>
        <taxon>Murinae</taxon>
        <taxon>Mus</taxon>
        <taxon>Mus</taxon>
    </lineage>
</organism>
<comment type="function">
    <text evidence="2 3 7">Catalyzes the hydrolysis of diacylglycerol in vitro and may function as a key regulator in lipid metabolism, namely by regulating the intracellular levels of diacylglycerol (By similarity). 1,2-diacyl-sn-glycerols are the preferred substrate over 1,3-diacyl-sn-glycerols. The enzyme hydrolyzes stearate in preference to palmitate from the sn-1 position of 1,2-diacyl-sn-glycerols (By similarity). Maintains the functional lipoylation of the 2-oxoglutarate dehydrogenase complex (OGDHc) through its interaction with the OGDHc by preventing the formation of lipoyl adducts (By similarity). In addition, is also required for the expansion and differentiation of embryonic stem cells (ESCs) (PubMed:32733886).</text>
</comment>
<comment type="catalytic activity">
    <reaction evidence="3">
        <text>1-octadecanoyl-2-(5Z,8Z,11Z,14Z-eicosatetraenoyl)-sn-glycerol + H2O = 2-(5Z,8Z,11Z,14Z-eicosatetraenoyl)-glycerol + octadecanoate + H(+)</text>
        <dbReference type="Rhea" id="RHEA:38507"/>
        <dbReference type="ChEBI" id="CHEBI:15377"/>
        <dbReference type="ChEBI" id="CHEBI:15378"/>
        <dbReference type="ChEBI" id="CHEBI:25629"/>
        <dbReference type="ChEBI" id="CHEBI:52392"/>
        <dbReference type="ChEBI" id="CHEBI:75728"/>
    </reaction>
</comment>
<comment type="catalytic activity">
    <reaction evidence="3">
        <text>a 1,2-diacyl-sn-glycerol + H2O = a 2-acylglycerol + a fatty acid + H(+)</text>
        <dbReference type="Rhea" id="RHEA:33275"/>
        <dbReference type="ChEBI" id="CHEBI:15377"/>
        <dbReference type="ChEBI" id="CHEBI:15378"/>
        <dbReference type="ChEBI" id="CHEBI:17389"/>
        <dbReference type="ChEBI" id="CHEBI:17815"/>
        <dbReference type="ChEBI" id="CHEBI:28868"/>
        <dbReference type="EC" id="3.1.1.116"/>
    </reaction>
</comment>
<comment type="catalytic activity">
    <reaction evidence="2">
        <text>a 1,3-diacyl-sn-glycerol + H2O = a 1-acyl-sn-glycerol + a fatty acid + H(+)</text>
        <dbReference type="Rhea" id="RHEA:38503"/>
        <dbReference type="ChEBI" id="CHEBI:15377"/>
        <dbReference type="ChEBI" id="CHEBI:15378"/>
        <dbReference type="ChEBI" id="CHEBI:28868"/>
        <dbReference type="ChEBI" id="CHEBI:64683"/>
        <dbReference type="ChEBI" id="CHEBI:77272"/>
    </reaction>
</comment>
<comment type="catalytic activity">
    <reaction evidence="2">
        <text>1-octadecanoyl-2-(9Z-octadecenoyl)-sn-glycerol + H2O = 2-(9Z-octadecenoyl)-glycerol + octadecanoate + H(+)</text>
        <dbReference type="Rhea" id="RHEA:77103"/>
        <dbReference type="ChEBI" id="CHEBI:15377"/>
        <dbReference type="ChEBI" id="CHEBI:15378"/>
        <dbReference type="ChEBI" id="CHEBI:25629"/>
        <dbReference type="ChEBI" id="CHEBI:73990"/>
        <dbReference type="ChEBI" id="CHEBI:75468"/>
    </reaction>
</comment>
<comment type="catalytic activity">
    <reaction evidence="2">
        <text>1-octadecanoyl-2-(4Z,7Z,10Z,13Z,16Z,19Z-docosahexaenoyl)-sn-glycerol + H2O = 2-(4Z,7Z,10Z,13Z,16Z,19Z-docosahexaenoyl)-glycerol + octadecanoate + H(+)</text>
        <dbReference type="Rhea" id="RHEA:77107"/>
        <dbReference type="ChEBI" id="CHEBI:15377"/>
        <dbReference type="ChEBI" id="CHEBI:15378"/>
        <dbReference type="ChEBI" id="CHEBI:25629"/>
        <dbReference type="ChEBI" id="CHEBI:77129"/>
        <dbReference type="ChEBI" id="CHEBI:186738"/>
    </reaction>
</comment>
<comment type="catalytic activity">
    <reaction evidence="2">
        <text>1,2-didecanoylglycerol + H2O = decanoylglycerol + decanoate + H(+)</text>
        <dbReference type="Rhea" id="RHEA:48596"/>
        <dbReference type="ChEBI" id="CHEBI:11152"/>
        <dbReference type="ChEBI" id="CHEBI:15377"/>
        <dbReference type="ChEBI" id="CHEBI:15378"/>
        <dbReference type="ChEBI" id="CHEBI:27689"/>
        <dbReference type="ChEBI" id="CHEBI:90605"/>
    </reaction>
</comment>
<comment type="subunit">
    <text evidence="3">Interacts with OGDH and DLST; this interaction maintains the functional lipoylation of the 2-oxoglutarate dehydrogenase complex.</text>
</comment>
<comment type="subcellular location">
    <subcellularLocation>
        <location evidence="6">Mitochondrion</location>
    </subcellularLocation>
    <subcellularLocation>
        <location evidence="3">Mitochondrion matrix</location>
    </subcellularLocation>
</comment>
<comment type="tissue specificity">
    <text evidence="5">Expressed in white adipose tissues.</text>
</comment>
<comment type="induction">
    <text evidence="5">Up-regulated by rosiglitazone and down-regulated by high fat feeding.</text>
</comment>
<comment type="PTM">
    <text evidence="2">Phosphorylated.</text>
</comment>
<comment type="disruption phenotype">
    <text evidence="6">Homozygous knockout mice lacking Abhd11 are viable and only a slight but significant reduction in body weight has been noticed in males exclusively (PubMed:32579589). In addition, less abdominal fat deposit is observed (PubMed:32579589). Mice show some eye defects, including iris synechiae, melanophagy in the iris or the ciliary body, cataract (with reduced lens size when advanced) and retinal atrophy (PubMed:32579589). Such ophthalmologic defects lead to blindness in 9-week old male KO mice (PubMed:32579589).</text>
</comment>
<comment type="similarity">
    <text evidence="8">Belongs to the AB hydrolase superfamily.</text>
</comment>
<proteinExistence type="evidence at protein level"/>
<protein>
    <recommendedName>
        <fullName evidence="8">sn-1-specific diacylglycerol lipase ABHD11</fullName>
        <ecNumber evidence="3">3.1.1.116</ecNumber>
    </recommendedName>
    <alternativeName>
        <fullName evidence="8">Alpha/beta hydrolase domain-containing protein 11</fullName>
        <shortName evidence="9">Abhydrolase domain-containing protein 11</shortName>
    </alternativeName>
    <alternativeName>
        <fullName>Williams-Beuren syndrome chromosomal region 21 protein homolog</fullName>
    </alternativeName>
</protein>